<proteinExistence type="evidence at protein level"/>
<keyword id="KW-0002">3D-structure</keyword>
<keyword id="KW-0021">Allosteric enzyme</keyword>
<keyword id="KW-0903">Direct protein sequencing</keyword>
<keyword id="KW-0378">Hydrolase</keyword>
<keyword id="KW-1185">Reference proteome</keyword>
<comment type="function">
    <text evidence="1 5">Catalyzes the hydrolysis of the N-glycosidic bond of AMP to form adenine and ribose 5-phosphate. Involved in regulation of AMP concentrations.</text>
</comment>
<comment type="catalytic activity">
    <reaction evidence="1 5">
        <text>AMP + H2O = adenine + D-ribose 5-phosphate</text>
        <dbReference type="Rhea" id="RHEA:20129"/>
        <dbReference type="ChEBI" id="CHEBI:15377"/>
        <dbReference type="ChEBI" id="CHEBI:16708"/>
        <dbReference type="ChEBI" id="CHEBI:78346"/>
        <dbReference type="ChEBI" id="CHEBI:456215"/>
        <dbReference type="EC" id="3.2.2.4"/>
    </reaction>
</comment>
<comment type="activity regulation">
    <text evidence="5">Allosterically activated by Mg-ATP. Inhibited by inorganic phosphate and formycin monophosphate.</text>
</comment>
<comment type="biophysicochemical properties">
    <kinetics>
        <KM evidence="5">15 mM for AMP (in the absence of Mg-ATP)</KM>
        <KM evidence="5">0.09 mM for AMP (in the presence of saturating Mg-ATP)</KM>
    </kinetics>
</comment>
<comment type="subunit">
    <text evidence="2">Homohexamer. Trimer of dimers.</text>
</comment>
<comment type="induction">
    <text evidence="4">By cAMP at limiting phosphate concentrations. Repressed by phosphate.</text>
</comment>
<comment type="domain">
    <text evidence="2">Each monomer consists of two domains: a C-terminal catalytic domain and a putative N-terminal regulatory domain.</text>
</comment>
<comment type="disruption phenotype">
    <text evidence="3">Knockout elevates intracellular ATP levels and increases cold tolerance.</text>
</comment>
<comment type="miscellaneous">
    <text evidence="6">AMP nucleosidase binds AMP at the catalytic site, Mg-ATP at an allosteric regulatory site, and inorganic phosphate also at a regulatory site.</text>
</comment>
<comment type="similarity">
    <text evidence="1 8">Belongs to the AMP nucleosidase family.</text>
</comment>
<feature type="chain" id="PRO_0000064586" description="AMP nucleosidase">
    <location>
        <begin position="1"/>
        <end position="484"/>
    </location>
</feature>
<feature type="sequence conflict" description="In Ref. 1; AAA23433." evidence="8" ref="1">
    <original>WLM</original>
    <variation>CY</variation>
    <location>
        <begin position="300"/>
        <end position="302"/>
    </location>
</feature>
<feature type="sequence conflict" description="In Ref. 1; AAA23433." evidence="8" ref="1">
    <original>ESQAIG</original>
    <variation>KVRPLA</variation>
    <location>
        <begin position="311"/>
        <end position="316"/>
    </location>
</feature>
<feature type="helix" evidence="12">
    <location>
        <begin position="10"/>
        <end position="38"/>
    </location>
</feature>
<feature type="helix" evidence="12">
    <location>
        <begin position="44"/>
        <end position="47"/>
    </location>
</feature>
<feature type="turn" evidence="12">
    <location>
        <begin position="48"/>
        <end position="50"/>
    </location>
</feature>
<feature type="strand" evidence="12">
    <location>
        <begin position="51"/>
        <end position="61"/>
    </location>
</feature>
<feature type="strand" evidence="12">
    <location>
        <begin position="73"/>
        <end position="75"/>
    </location>
</feature>
<feature type="strand" evidence="12">
    <location>
        <begin position="78"/>
        <end position="86"/>
    </location>
</feature>
<feature type="turn" evidence="12">
    <location>
        <begin position="90"/>
        <end position="93"/>
    </location>
</feature>
<feature type="helix" evidence="12">
    <location>
        <begin position="94"/>
        <end position="108"/>
    </location>
</feature>
<feature type="strand" evidence="12">
    <location>
        <begin position="111"/>
        <end position="120"/>
    </location>
</feature>
<feature type="helix" evidence="12">
    <location>
        <begin position="123"/>
        <end position="126"/>
    </location>
</feature>
<feature type="helix" evidence="12">
    <location>
        <begin position="136"/>
        <end position="145"/>
    </location>
</feature>
<feature type="strand" evidence="12">
    <location>
        <begin position="169"/>
        <end position="174"/>
    </location>
</feature>
<feature type="helix" evidence="12">
    <location>
        <begin position="176"/>
        <end position="190"/>
    </location>
</feature>
<feature type="helix" evidence="12">
    <location>
        <begin position="194"/>
        <end position="196"/>
    </location>
</feature>
<feature type="strand" evidence="12">
    <location>
        <begin position="199"/>
        <end position="205"/>
    </location>
</feature>
<feature type="helix" evidence="12">
    <location>
        <begin position="208"/>
        <end position="222"/>
    </location>
</feature>
<feature type="strand" evidence="12">
    <location>
        <begin position="226"/>
        <end position="233"/>
    </location>
</feature>
<feature type="strand" evidence="12">
    <location>
        <begin position="238"/>
        <end position="240"/>
    </location>
</feature>
<feature type="helix" evidence="12">
    <location>
        <begin position="246"/>
        <end position="248"/>
    </location>
</feature>
<feature type="helix" evidence="12">
    <location>
        <begin position="254"/>
        <end position="257"/>
    </location>
</feature>
<feature type="strand" evidence="12">
    <location>
        <begin position="262"/>
        <end position="267"/>
    </location>
</feature>
<feature type="strand" evidence="12">
    <location>
        <begin position="273"/>
        <end position="277"/>
    </location>
</feature>
<feature type="helix" evidence="12">
    <location>
        <begin position="282"/>
        <end position="292"/>
    </location>
</feature>
<feature type="helix" evidence="12">
    <location>
        <begin position="293"/>
        <end position="295"/>
    </location>
</feature>
<feature type="strand" evidence="12">
    <location>
        <begin position="298"/>
        <end position="302"/>
    </location>
</feature>
<feature type="strand" evidence="12">
    <location>
        <begin position="305"/>
        <end position="308"/>
    </location>
</feature>
<feature type="strand" evidence="12">
    <location>
        <begin position="318"/>
        <end position="327"/>
    </location>
</feature>
<feature type="turn" evidence="12">
    <location>
        <begin position="330"/>
        <end position="334"/>
    </location>
</feature>
<feature type="helix" evidence="12">
    <location>
        <begin position="345"/>
        <end position="358"/>
    </location>
</feature>
<feature type="helix" evidence="12">
    <location>
        <begin position="363"/>
        <end position="368"/>
    </location>
</feature>
<feature type="strand" evidence="12">
    <location>
        <begin position="370"/>
        <end position="379"/>
    </location>
</feature>
<feature type="helix" evidence="12">
    <location>
        <begin position="383"/>
        <end position="386"/>
    </location>
</feature>
<feature type="helix" evidence="12">
    <location>
        <begin position="387"/>
        <end position="397"/>
    </location>
</feature>
<feature type="strand" evidence="12">
    <location>
        <begin position="399"/>
        <end position="405"/>
    </location>
</feature>
<feature type="helix" evidence="12">
    <location>
        <begin position="406"/>
        <end position="415"/>
    </location>
</feature>
<feature type="strand" evidence="12">
    <location>
        <begin position="420"/>
        <end position="428"/>
    </location>
</feature>
<feature type="helix" evidence="11">
    <location>
        <begin position="430"/>
        <end position="432"/>
    </location>
</feature>
<feature type="helix" evidence="11">
    <location>
        <begin position="443"/>
        <end position="446"/>
    </location>
</feature>
<feature type="helix" evidence="12">
    <location>
        <begin position="448"/>
        <end position="465"/>
    </location>
</feature>
<feature type="turn" evidence="12">
    <location>
        <begin position="466"/>
        <end position="470"/>
    </location>
</feature>
<feature type="helix" evidence="11">
    <location>
        <begin position="473"/>
        <end position="475"/>
    </location>
</feature>
<sequence>MNNKGSGLTPAQALDKLDALYEQSVVALRNAIGNYITSGELPDENARKQGLFVYPSLTVTWDGSTTNPPKTRAFGRFTHAGSYTTTITRPTLFRSYLNEQLTLLYQDYGAHISVQPSQHEIPYPYVIDGSELTLDRSMSAGLTRYFPTTELAQIGDETADGIYHPTEFSPLSHFDARRVDFSLARLRHYTGTPVEHFQPFVLFTNYTRYVDEFVRWGCSQILDPDSPYIALSCAGGNWITAETEAPEEAISDLAWKKHQMPAWHLITADGQGITLVNIGVGPSNAKTICDHLAVLRPDVWLMIGHCGGLRESQAIGDYVLAHAYLRDDHVLDAVLPPDIPIPSIAEVQRALYDATKLVSGRPGEEVKQRLRTGTVVTTDDRNWELRYSASALRFNLSRAVAIDMESATIAAQGYRFRVPYGTLLCVSDKPLHGEIKLPGQANRFYEGAISEHLQIGIRAIDLLRAEGDRLHSRKLRTFNEPPFR</sequence>
<organism>
    <name type="scientific">Escherichia coli (strain K12)</name>
    <dbReference type="NCBI Taxonomy" id="83333"/>
    <lineage>
        <taxon>Bacteria</taxon>
        <taxon>Pseudomonadati</taxon>
        <taxon>Pseudomonadota</taxon>
        <taxon>Gammaproteobacteria</taxon>
        <taxon>Enterobacterales</taxon>
        <taxon>Enterobacteriaceae</taxon>
        <taxon>Escherichia</taxon>
    </lineage>
</organism>
<protein>
    <recommendedName>
        <fullName evidence="1 7">AMP nucleosidase</fullName>
        <ecNumber evidence="1 5">3.2.2.4</ecNumber>
    </recommendedName>
</protein>
<reference key="1">
    <citation type="journal article" date="1989" name="Biochemistry">
        <title>Structure and regulation of the AMP nucleosidase gene (amn) from Escherichia coli.</title>
        <authorList>
            <person name="Leung H.B."/>
            <person name="Kvalnes-Krick K.L."/>
            <person name="Meyer S.L."/>
            <person name="Deriel J.K."/>
            <person name="Schramm V.L."/>
        </authorList>
    </citation>
    <scope>NUCLEOTIDE SEQUENCE [GENOMIC DNA]</scope>
    <scope>PARTIAL PROTEIN SEQUENCE</scope>
    <scope>INDUCTION</scope>
</reference>
<reference key="2">
    <citation type="journal article" date="1996" name="DNA Res.">
        <title>A 460-kb DNA sequence of the Escherichia coli K-12 genome corresponding to the 40.1-50.0 min region on the linkage map.</title>
        <authorList>
            <person name="Itoh T."/>
            <person name="Aiba H."/>
            <person name="Baba T."/>
            <person name="Fujita K."/>
            <person name="Hayashi K."/>
            <person name="Inada T."/>
            <person name="Isono K."/>
            <person name="Kasai H."/>
            <person name="Kimura S."/>
            <person name="Kitakawa M."/>
            <person name="Kitagawa M."/>
            <person name="Makino K."/>
            <person name="Miki T."/>
            <person name="Mizobuchi K."/>
            <person name="Mori H."/>
            <person name="Mori T."/>
            <person name="Motomura K."/>
            <person name="Nakade S."/>
            <person name="Nakamura Y."/>
            <person name="Nashimoto H."/>
            <person name="Nishio Y."/>
            <person name="Oshima T."/>
            <person name="Saito N."/>
            <person name="Sampei G."/>
            <person name="Seki Y."/>
            <person name="Sivasundaram S."/>
            <person name="Tagami H."/>
            <person name="Takeda J."/>
            <person name="Takemoto K."/>
            <person name="Wada C."/>
            <person name="Yamamoto Y."/>
            <person name="Horiuchi T."/>
        </authorList>
    </citation>
    <scope>NUCLEOTIDE SEQUENCE [LARGE SCALE GENOMIC DNA]</scope>
    <source>
        <strain>K12 / W3110 / ATCC 27325 / DSM 5911</strain>
    </source>
</reference>
<reference key="3">
    <citation type="journal article" date="1997" name="Science">
        <title>The complete genome sequence of Escherichia coli K-12.</title>
        <authorList>
            <person name="Blattner F.R."/>
            <person name="Plunkett G. III"/>
            <person name="Bloch C.A."/>
            <person name="Perna N.T."/>
            <person name="Burland V."/>
            <person name="Riley M."/>
            <person name="Collado-Vides J."/>
            <person name="Glasner J.D."/>
            <person name="Rode C.K."/>
            <person name="Mayhew G.F."/>
            <person name="Gregor J."/>
            <person name="Davis N.W."/>
            <person name="Kirkpatrick H.A."/>
            <person name="Goeden M.A."/>
            <person name="Rose D.J."/>
            <person name="Mau B."/>
            <person name="Shao Y."/>
        </authorList>
    </citation>
    <scope>NUCLEOTIDE SEQUENCE [LARGE SCALE GENOMIC DNA]</scope>
    <source>
        <strain>K12 / MG1655 / ATCC 47076</strain>
    </source>
</reference>
<reference key="4">
    <citation type="journal article" date="2006" name="Mol. Syst. Biol.">
        <title>Highly accurate genome sequences of Escherichia coli K-12 strains MG1655 and W3110.</title>
        <authorList>
            <person name="Hayashi K."/>
            <person name="Morooka N."/>
            <person name="Yamamoto Y."/>
            <person name="Fujita K."/>
            <person name="Isono K."/>
            <person name="Choi S."/>
            <person name="Ohtsubo E."/>
            <person name="Baba T."/>
            <person name="Wanner B.L."/>
            <person name="Mori H."/>
            <person name="Horiuchi T."/>
        </authorList>
    </citation>
    <scope>NUCLEOTIDE SEQUENCE [LARGE SCALE GENOMIC DNA]</scope>
    <source>
        <strain>K12 / W3110 / ATCC 27325 / DSM 5911</strain>
    </source>
</reference>
<reference key="5">
    <citation type="journal article" date="1998" name="Gene">
        <title>Cloning and analysis of the shiA gene, which encodes the shikimate transport system of Escherichia coli K-12.</title>
        <authorList>
            <person name="Whipp M.J."/>
            <person name="Camakaris H."/>
            <person name="Pittard A.J."/>
        </authorList>
    </citation>
    <scope>NUCLEOTIDE SEQUENCE [GENOMIC DNA] OF 1-159</scope>
    <source>
        <strain>K12</strain>
    </source>
</reference>
<reference key="6">
    <citation type="journal article" date="1980" name="J. Biol. Chem.">
        <title>Adenylate degradation in Escherichia coli. The role of AMP nucleosidase and properties of the purified enzyme.</title>
        <authorList>
            <person name="Leung H.B."/>
            <person name="Schramm V.L."/>
        </authorList>
    </citation>
    <scope>FUNCTION</scope>
    <scope>CATALYTIC ACTIVITY</scope>
    <scope>ACTIVITY REGULATION</scope>
    <scope>BIOPHYSICOCHEMICAL PROPERTIES</scope>
    <source>
        <strain>K12</strain>
    </source>
</reference>
<reference key="7">
    <citation type="journal article" date="1997" name="Electrophoresis">
        <title>Escherichia coli proteome analysis using the gene-protein database.</title>
        <authorList>
            <person name="VanBogelen R.A."/>
            <person name="Abshire K.Z."/>
            <person name="Moldover B."/>
            <person name="Olson E.R."/>
            <person name="Neidhardt F.C."/>
        </authorList>
    </citation>
    <scope>IDENTIFICATION BY 2D-GEL</scope>
</reference>
<reference key="8">
    <citation type="journal article" date="2008" name="Biol. Lett.">
        <title>An AMP nucleosidase gene knockout in Escherichia coli elevates intracellular ATP levels and increases cold tolerance.</title>
        <authorList>
            <person name="Morrison B.A."/>
            <person name="Shain D.H."/>
        </authorList>
    </citation>
    <scope>DISRUPTION PHENOTYPE</scope>
</reference>
<reference key="9">
    <citation type="journal article" date="2004" name="Structure">
        <title>Structure of Escherichia coli AMP nucleosidase reveals similarity to nucleoside phosphorylases.</title>
        <authorList>
            <person name="Zhang Y."/>
            <person name="Cottet S.E."/>
            <person name="Ealick S.E."/>
        </authorList>
    </citation>
    <scope>X-RAY CRYSTALLOGRAPHY (2.60 ANGSTROMS) IN COMPLEX WITH FORMYCIN-5'-MONOPHOSPHATE AND PHOSPHATE</scope>
    <scope>SUBUNIT</scope>
    <scope>DOMAIN</scope>
</reference>
<accession>P0AE12</accession>
<accession>P15272</accession>
<accession>P78074</accession>
<evidence type="ECO:0000255" key="1">
    <source>
        <dbReference type="HAMAP-Rule" id="MF_01932"/>
    </source>
</evidence>
<evidence type="ECO:0000269" key="2">
    <source>
    </source>
</evidence>
<evidence type="ECO:0000269" key="3">
    <source>
    </source>
</evidence>
<evidence type="ECO:0000269" key="4">
    <source>
    </source>
</evidence>
<evidence type="ECO:0000269" key="5">
    <source>
    </source>
</evidence>
<evidence type="ECO:0000303" key="6">
    <source>
    </source>
</evidence>
<evidence type="ECO:0000303" key="7">
    <source>
    </source>
</evidence>
<evidence type="ECO:0000305" key="8"/>
<evidence type="ECO:0000312" key="9">
    <source>
        <dbReference type="EMBL" id="AAC75046.1"/>
    </source>
</evidence>
<evidence type="ECO:0000312" key="10">
    <source>
        <dbReference type="EMBL" id="BAA15802.1"/>
    </source>
</evidence>
<evidence type="ECO:0007829" key="11">
    <source>
        <dbReference type="PDB" id="1T8R"/>
    </source>
</evidence>
<evidence type="ECO:0007829" key="12">
    <source>
        <dbReference type="PDB" id="1T8S"/>
    </source>
</evidence>
<dbReference type="EC" id="3.2.2.4" evidence="1 5"/>
<dbReference type="EMBL" id="M30469">
    <property type="protein sequence ID" value="AAA23433.1"/>
    <property type="molecule type" value="Genomic_DNA"/>
</dbReference>
<dbReference type="EMBL" id="U00096">
    <property type="protein sequence ID" value="AAC75046.1"/>
    <property type="molecule type" value="Genomic_DNA"/>
</dbReference>
<dbReference type="EMBL" id="AP009048">
    <property type="protein sequence ID" value="BAA15802.1"/>
    <property type="molecule type" value="Genomic_DNA"/>
</dbReference>
<dbReference type="EMBL" id="U88529">
    <property type="protein sequence ID" value="AAC46272.1"/>
    <property type="molecule type" value="Genomic_DNA"/>
</dbReference>
<dbReference type="PIR" id="H64962">
    <property type="entry name" value="H64962"/>
</dbReference>
<dbReference type="RefSeq" id="NP_416489.1">
    <property type="nucleotide sequence ID" value="NC_000913.3"/>
</dbReference>
<dbReference type="RefSeq" id="WP_001060244.1">
    <property type="nucleotide sequence ID" value="NZ_SSTT01000011.1"/>
</dbReference>
<dbReference type="PDB" id="1T8R">
    <property type="method" value="X-ray"/>
    <property type="resolution" value="2.70 A"/>
    <property type="chains" value="A/B/C/D/E/F=1-484"/>
</dbReference>
<dbReference type="PDB" id="1T8S">
    <property type="method" value="X-ray"/>
    <property type="resolution" value="2.60 A"/>
    <property type="chains" value="A/B/C/D/E/F=1-484"/>
</dbReference>
<dbReference type="PDB" id="1T8W">
    <property type="method" value="X-ray"/>
    <property type="resolution" value="2.80 A"/>
    <property type="chains" value="A/B/C/D/E/F=1-484"/>
</dbReference>
<dbReference type="PDB" id="1T8Y">
    <property type="method" value="X-ray"/>
    <property type="resolution" value="3.00 A"/>
    <property type="chains" value="A/B/C/D/E/F=1-484"/>
</dbReference>
<dbReference type="PDBsum" id="1T8R"/>
<dbReference type="PDBsum" id="1T8S"/>
<dbReference type="PDBsum" id="1T8W"/>
<dbReference type="PDBsum" id="1T8Y"/>
<dbReference type="SMR" id="P0AE12"/>
<dbReference type="BioGRID" id="4260401">
    <property type="interactions" value="18"/>
</dbReference>
<dbReference type="FunCoup" id="P0AE12">
    <property type="interactions" value="123"/>
</dbReference>
<dbReference type="IntAct" id="P0AE12">
    <property type="interactions" value="8"/>
</dbReference>
<dbReference type="STRING" id="511145.b1982"/>
<dbReference type="DrugBank" id="DB03464">
    <property type="generic name" value="Formycin-5'-Monophosphate"/>
</dbReference>
<dbReference type="jPOST" id="P0AE12"/>
<dbReference type="PaxDb" id="511145-b1982"/>
<dbReference type="EnsemblBacteria" id="AAC75046">
    <property type="protein sequence ID" value="AAC75046"/>
    <property type="gene ID" value="b1982"/>
</dbReference>
<dbReference type="GeneID" id="75202785"/>
<dbReference type="GeneID" id="946508"/>
<dbReference type="KEGG" id="ecj:JW1963"/>
<dbReference type="KEGG" id="eco:b1982"/>
<dbReference type="KEGG" id="ecoc:C3026_11190"/>
<dbReference type="PATRIC" id="fig|1411691.4.peg.269"/>
<dbReference type="EchoBASE" id="EB0037"/>
<dbReference type="eggNOG" id="COG0775">
    <property type="taxonomic scope" value="Bacteria"/>
</dbReference>
<dbReference type="HOGENOM" id="CLU_026838_1_0_6"/>
<dbReference type="InParanoid" id="P0AE12"/>
<dbReference type="OMA" id="RPHAWIM"/>
<dbReference type="OrthoDB" id="7945729at2"/>
<dbReference type="PhylomeDB" id="P0AE12"/>
<dbReference type="BioCyc" id="EcoCyc:AMP-NUCLEOSID-MONOMER"/>
<dbReference type="BioCyc" id="MetaCyc:AMP-NUCLEOSID-MONOMER"/>
<dbReference type="EvolutionaryTrace" id="P0AE12"/>
<dbReference type="PRO" id="PR:P0AE12"/>
<dbReference type="Proteomes" id="UP000000625">
    <property type="component" value="Chromosome"/>
</dbReference>
<dbReference type="GO" id="GO:0005829">
    <property type="term" value="C:cytosol"/>
    <property type="evidence" value="ECO:0000314"/>
    <property type="project" value="EcoCyc"/>
</dbReference>
<dbReference type="GO" id="GO:0008714">
    <property type="term" value="F:AMP nucleosidase activity"/>
    <property type="evidence" value="ECO:0000314"/>
    <property type="project" value="EcoCyc"/>
</dbReference>
<dbReference type="GO" id="GO:0044209">
    <property type="term" value="P:AMP salvage"/>
    <property type="evidence" value="ECO:0007669"/>
    <property type="project" value="InterPro"/>
</dbReference>
<dbReference type="GO" id="GO:0009116">
    <property type="term" value="P:nucleoside metabolic process"/>
    <property type="evidence" value="ECO:0007669"/>
    <property type="project" value="InterPro"/>
</dbReference>
<dbReference type="CDD" id="cd17762">
    <property type="entry name" value="AMN"/>
    <property type="match status" value="1"/>
</dbReference>
<dbReference type="FunFam" id="3.40.50.1580:FF:000005">
    <property type="entry name" value="AMP nucleosidase"/>
    <property type="match status" value="1"/>
</dbReference>
<dbReference type="Gene3D" id="3.30.1730.10">
    <property type="entry name" value="AMP nucleoside phosphorylase, N-terminal domain"/>
    <property type="match status" value="1"/>
</dbReference>
<dbReference type="Gene3D" id="3.40.50.1580">
    <property type="entry name" value="Nucleoside phosphorylase domain"/>
    <property type="match status" value="1"/>
</dbReference>
<dbReference type="HAMAP" id="MF_01932">
    <property type="entry name" value="AMP_nucleosidase"/>
    <property type="match status" value="1"/>
</dbReference>
<dbReference type="InterPro" id="IPR047039">
    <property type="entry name" value="AMN_phosphorylase"/>
</dbReference>
<dbReference type="InterPro" id="IPR037109">
    <property type="entry name" value="AMP_N_sf"/>
</dbReference>
<dbReference type="InterPro" id="IPR011271">
    <property type="entry name" value="AMP_nucleosidase"/>
</dbReference>
<dbReference type="InterPro" id="IPR018953">
    <property type="entry name" value="AMP_nucleoside_Pase_N"/>
</dbReference>
<dbReference type="InterPro" id="IPR000845">
    <property type="entry name" value="Nucleoside_phosphorylase_d"/>
</dbReference>
<dbReference type="InterPro" id="IPR035994">
    <property type="entry name" value="Nucleoside_phosphorylase_sf"/>
</dbReference>
<dbReference type="NCBIfam" id="TIGR01717">
    <property type="entry name" value="AMP-nucleosdse"/>
    <property type="match status" value="1"/>
</dbReference>
<dbReference type="NCBIfam" id="NF006142">
    <property type="entry name" value="PRK08292.1"/>
    <property type="match status" value="1"/>
</dbReference>
<dbReference type="PANTHER" id="PTHR43691:SF6">
    <property type="entry name" value="AMP NUCLEOSIDASE"/>
    <property type="match status" value="1"/>
</dbReference>
<dbReference type="PANTHER" id="PTHR43691">
    <property type="entry name" value="URIDINE PHOSPHORYLASE"/>
    <property type="match status" value="1"/>
</dbReference>
<dbReference type="Pfam" id="PF10423">
    <property type="entry name" value="AMNp_N"/>
    <property type="match status" value="1"/>
</dbReference>
<dbReference type="Pfam" id="PF01048">
    <property type="entry name" value="PNP_UDP_1"/>
    <property type="match status" value="1"/>
</dbReference>
<dbReference type="SUPFAM" id="SSF53167">
    <property type="entry name" value="Purine and uridine phosphorylases"/>
    <property type="match status" value="1"/>
</dbReference>
<gene>
    <name evidence="1 6" type="primary">amn</name>
    <name evidence="9" type="ordered locus">b1982</name>
    <name evidence="10" type="ordered locus">JW1963</name>
</gene>
<name>AMN_ECOLI</name>